<organism>
    <name type="scientific">Salmonella enteritidis PT4 (strain P125109)</name>
    <dbReference type="NCBI Taxonomy" id="550537"/>
    <lineage>
        <taxon>Bacteria</taxon>
        <taxon>Pseudomonadati</taxon>
        <taxon>Pseudomonadota</taxon>
        <taxon>Gammaproteobacteria</taxon>
        <taxon>Enterobacterales</taxon>
        <taxon>Enterobacteriaceae</taxon>
        <taxon>Salmonella</taxon>
    </lineage>
</organism>
<protein>
    <recommendedName>
        <fullName evidence="1">o-succinylbenzoate synthase</fullName>
        <shortName evidence="1">OSB synthase</shortName>
        <shortName evidence="1">OSBS</shortName>
        <ecNumber evidence="1">4.2.1.113</ecNumber>
    </recommendedName>
    <alternativeName>
        <fullName evidence="1">4-(2'-carboxyphenyl)-4-oxybutyric acid synthase</fullName>
    </alternativeName>
    <alternativeName>
        <fullName evidence="1">o-succinylbenzoic acid synthase</fullName>
    </alternativeName>
</protein>
<comment type="function">
    <text evidence="1">Converts 2-succinyl-6-hydroxy-2,4-cyclohexadiene-1-carboxylate (SHCHC) to 2-succinylbenzoate (OSB).</text>
</comment>
<comment type="catalytic activity">
    <reaction evidence="1">
        <text>(1R,6R)-6-hydroxy-2-succinyl-cyclohexa-2,4-diene-1-carboxylate = 2-succinylbenzoate + H2O</text>
        <dbReference type="Rhea" id="RHEA:10196"/>
        <dbReference type="ChEBI" id="CHEBI:15377"/>
        <dbReference type="ChEBI" id="CHEBI:18325"/>
        <dbReference type="ChEBI" id="CHEBI:58689"/>
        <dbReference type="EC" id="4.2.1.113"/>
    </reaction>
</comment>
<comment type="cofactor">
    <cofactor evidence="1">
        <name>a divalent metal cation</name>
        <dbReference type="ChEBI" id="CHEBI:60240"/>
    </cofactor>
</comment>
<comment type="pathway">
    <text evidence="1">Quinol/quinone metabolism; 1,4-dihydroxy-2-naphthoate biosynthesis; 1,4-dihydroxy-2-naphthoate from chorismate: step 4/7.</text>
</comment>
<comment type="pathway">
    <text evidence="1">Quinol/quinone metabolism; menaquinone biosynthesis.</text>
</comment>
<comment type="similarity">
    <text evidence="1">Belongs to the mandelate racemase/muconate lactonizing enzyme family. MenC type 1 subfamily.</text>
</comment>
<gene>
    <name evidence="1" type="primary">menC</name>
    <name type="ordered locus">SEN2288</name>
</gene>
<name>MENC_SALEP</name>
<sequence length="320" mass="35332">MRSAQVYRWQIPMDAGVVLRDRRLKTRDGLYVCLRDGEREGWGEISPLPGFSQETWEEAQTALLTWVNDWLQGSEGLPEMPSVAFGASCALAELTGVLPEAADYRAAPLCTGDPDDLVLRLADMPGEKIAKVKVGLYEAVRDGMVVNLLLEAIPDLHLRLDANRAWTPLKAQQFAKYVNPDYRARIAFLEEPCKTRDDSRAFARETGIAIAWDESLREADFTFEAEEGVRAVVIKPTLTGSLDKVREQVAAAHALGLTAVISSSIESSLGLTQLARIAAWLTPGTLPGLDTLHLMQAQQVRPWPGSALPCLKRDELERLL</sequence>
<feature type="chain" id="PRO_1000125580" description="o-succinylbenzoate synthase">
    <location>
        <begin position="1"/>
        <end position="320"/>
    </location>
</feature>
<feature type="active site" description="Proton donor" evidence="1">
    <location>
        <position position="133"/>
    </location>
</feature>
<feature type="active site" description="Proton acceptor" evidence="1">
    <location>
        <position position="235"/>
    </location>
</feature>
<feature type="binding site" evidence="1">
    <location>
        <position position="161"/>
    </location>
    <ligand>
        <name>Mg(2+)</name>
        <dbReference type="ChEBI" id="CHEBI:18420"/>
    </ligand>
</feature>
<feature type="binding site" evidence="1">
    <location>
        <position position="190"/>
    </location>
    <ligand>
        <name>Mg(2+)</name>
        <dbReference type="ChEBI" id="CHEBI:18420"/>
    </ligand>
</feature>
<feature type="binding site" evidence="1">
    <location>
        <position position="213"/>
    </location>
    <ligand>
        <name>Mg(2+)</name>
        <dbReference type="ChEBI" id="CHEBI:18420"/>
    </ligand>
</feature>
<dbReference type="EC" id="4.2.1.113" evidence="1"/>
<dbReference type="EMBL" id="AM933172">
    <property type="protein sequence ID" value="CAR33872.1"/>
    <property type="molecule type" value="Genomic_DNA"/>
</dbReference>
<dbReference type="RefSeq" id="WP_001255563.1">
    <property type="nucleotide sequence ID" value="NC_011294.1"/>
</dbReference>
<dbReference type="SMR" id="B5R2Y7"/>
<dbReference type="KEGG" id="set:SEN2288"/>
<dbReference type="HOGENOM" id="CLU_030273_0_1_6"/>
<dbReference type="UniPathway" id="UPA00079"/>
<dbReference type="UniPathway" id="UPA01057">
    <property type="reaction ID" value="UER00165"/>
</dbReference>
<dbReference type="Proteomes" id="UP000000613">
    <property type="component" value="Chromosome"/>
</dbReference>
<dbReference type="GO" id="GO:0000287">
    <property type="term" value="F:magnesium ion binding"/>
    <property type="evidence" value="ECO:0007669"/>
    <property type="project" value="UniProtKB-UniRule"/>
</dbReference>
<dbReference type="GO" id="GO:0043748">
    <property type="term" value="F:O-succinylbenzoate synthase activity"/>
    <property type="evidence" value="ECO:0007669"/>
    <property type="project" value="UniProtKB-EC"/>
</dbReference>
<dbReference type="GO" id="GO:0009234">
    <property type="term" value="P:menaquinone biosynthetic process"/>
    <property type="evidence" value="ECO:0007669"/>
    <property type="project" value="UniProtKB-UniRule"/>
</dbReference>
<dbReference type="CDD" id="cd03320">
    <property type="entry name" value="OSBS"/>
    <property type="match status" value="1"/>
</dbReference>
<dbReference type="FunFam" id="3.20.20.120:FF:000006">
    <property type="entry name" value="o-succinylbenzoate synthase"/>
    <property type="match status" value="1"/>
</dbReference>
<dbReference type="Gene3D" id="3.20.20.120">
    <property type="entry name" value="Enolase-like C-terminal domain"/>
    <property type="match status" value="1"/>
</dbReference>
<dbReference type="Gene3D" id="3.30.390.10">
    <property type="entry name" value="Enolase-like, N-terminal domain"/>
    <property type="match status" value="1"/>
</dbReference>
<dbReference type="HAMAP" id="MF_00470">
    <property type="entry name" value="MenC_1"/>
    <property type="match status" value="1"/>
</dbReference>
<dbReference type="InterPro" id="IPR036849">
    <property type="entry name" value="Enolase-like_C_sf"/>
</dbReference>
<dbReference type="InterPro" id="IPR029017">
    <property type="entry name" value="Enolase-like_N"/>
</dbReference>
<dbReference type="InterPro" id="IPR029065">
    <property type="entry name" value="Enolase_C-like"/>
</dbReference>
<dbReference type="InterPro" id="IPR013342">
    <property type="entry name" value="Mandelate_racemase_C"/>
</dbReference>
<dbReference type="InterPro" id="IPR010196">
    <property type="entry name" value="OSB_synthase_MenC1"/>
</dbReference>
<dbReference type="InterPro" id="IPR041338">
    <property type="entry name" value="OSBS_N"/>
</dbReference>
<dbReference type="NCBIfam" id="TIGR01927">
    <property type="entry name" value="menC_gam_Gplu"/>
    <property type="match status" value="1"/>
</dbReference>
<dbReference type="NCBIfam" id="NF003473">
    <property type="entry name" value="PRK05105.1"/>
    <property type="match status" value="1"/>
</dbReference>
<dbReference type="PANTHER" id="PTHR48073:SF2">
    <property type="entry name" value="O-SUCCINYLBENZOATE SYNTHASE"/>
    <property type="match status" value="1"/>
</dbReference>
<dbReference type="PANTHER" id="PTHR48073">
    <property type="entry name" value="O-SUCCINYLBENZOATE SYNTHASE-RELATED"/>
    <property type="match status" value="1"/>
</dbReference>
<dbReference type="Pfam" id="PF21508">
    <property type="entry name" value="MenC_N"/>
    <property type="match status" value="1"/>
</dbReference>
<dbReference type="Pfam" id="PF13378">
    <property type="entry name" value="MR_MLE_C"/>
    <property type="match status" value="1"/>
</dbReference>
<dbReference type="SFLD" id="SFLDS00001">
    <property type="entry name" value="Enolase"/>
    <property type="match status" value="1"/>
</dbReference>
<dbReference type="SFLD" id="SFLDF00009">
    <property type="entry name" value="o-succinylbenzoate_synthase"/>
    <property type="match status" value="1"/>
</dbReference>
<dbReference type="SMART" id="SM00922">
    <property type="entry name" value="MR_MLE"/>
    <property type="match status" value="1"/>
</dbReference>
<dbReference type="SUPFAM" id="SSF51604">
    <property type="entry name" value="Enolase C-terminal domain-like"/>
    <property type="match status" value="1"/>
</dbReference>
<dbReference type="SUPFAM" id="SSF54826">
    <property type="entry name" value="Enolase N-terminal domain-like"/>
    <property type="match status" value="1"/>
</dbReference>
<evidence type="ECO:0000255" key="1">
    <source>
        <dbReference type="HAMAP-Rule" id="MF_00470"/>
    </source>
</evidence>
<accession>B5R2Y7</accession>
<proteinExistence type="inferred from homology"/>
<reference key="1">
    <citation type="journal article" date="2008" name="Genome Res.">
        <title>Comparative genome analysis of Salmonella enteritidis PT4 and Salmonella gallinarum 287/91 provides insights into evolutionary and host adaptation pathways.</title>
        <authorList>
            <person name="Thomson N.R."/>
            <person name="Clayton D.J."/>
            <person name="Windhorst D."/>
            <person name="Vernikos G."/>
            <person name="Davidson S."/>
            <person name="Churcher C."/>
            <person name="Quail M.A."/>
            <person name="Stevens M."/>
            <person name="Jones M.A."/>
            <person name="Watson M."/>
            <person name="Barron A."/>
            <person name="Layton A."/>
            <person name="Pickard D."/>
            <person name="Kingsley R.A."/>
            <person name="Bignell A."/>
            <person name="Clark L."/>
            <person name="Harris B."/>
            <person name="Ormond D."/>
            <person name="Abdellah Z."/>
            <person name="Brooks K."/>
            <person name="Cherevach I."/>
            <person name="Chillingworth T."/>
            <person name="Woodward J."/>
            <person name="Norberczak H."/>
            <person name="Lord A."/>
            <person name="Arrowsmith C."/>
            <person name="Jagels K."/>
            <person name="Moule S."/>
            <person name="Mungall K."/>
            <person name="Saunders M."/>
            <person name="Whitehead S."/>
            <person name="Chabalgoity J.A."/>
            <person name="Maskell D."/>
            <person name="Humphreys T."/>
            <person name="Roberts M."/>
            <person name="Barrow P.A."/>
            <person name="Dougan G."/>
            <person name="Parkhill J."/>
        </authorList>
    </citation>
    <scope>NUCLEOTIDE SEQUENCE [LARGE SCALE GENOMIC DNA]</scope>
    <source>
        <strain>P125109</strain>
    </source>
</reference>
<keyword id="KW-0456">Lyase</keyword>
<keyword id="KW-0460">Magnesium</keyword>
<keyword id="KW-0474">Menaquinone biosynthesis</keyword>
<keyword id="KW-0479">Metal-binding</keyword>